<sequence>MNLHEYQSKHLLKKYNIPVPASEVVFNPDAAVDAAAKIGGDRWVVKAQVHAGGRGKAGGVRLVKNKEELKSAVKALLGTRLVTYQTDERGQPVNQILVEQTSDIARELYLGAVIDRASQRIVFMASTEGGVEIEKVAEKSPEKILKVTIDPAIGLQPFQCRQLFFGLGLQDLKQMRSFTDIVMGLYRLFTERDLSLLEINPLVITGSGELICLDAKINIDDSALYRQSELREMRDTTQEDEHETMAQQWELNYIKLDGNIGCMVNGAGLAMATMDLIKLSGGDPANFLDVGGSATKERVTEAFKIIVSDKNVKGILVNIFGGIVRCDLIADGIISAVKEVGIDVPVVVRLEGNNAQLGAKKLADSGMNIIAAKGFADAAEQIVKQVGVIA</sequence>
<gene>
    <name evidence="1" type="primary">sucC</name>
    <name type="ordered locus">CBU_1397</name>
</gene>
<dbReference type="EC" id="6.2.1.5" evidence="1"/>
<dbReference type="EMBL" id="U07789">
    <property type="protein sequence ID" value="AAA61787.1"/>
    <property type="molecule type" value="Unassigned_DNA"/>
</dbReference>
<dbReference type="EMBL" id="X77919">
    <property type="protein sequence ID" value="CAA54876.1"/>
    <property type="molecule type" value="Genomic_DNA"/>
</dbReference>
<dbReference type="EMBL" id="AE016828">
    <property type="protein sequence ID" value="AAO90896.1"/>
    <property type="molecule type" value="Genomic_DNA"/>
</dbReference>
<dbReference type="RefSeq" id="NP_820382.1">
    <property type="nucleotide sequence ID" value="NC_002971.4"/>
</dbReference>
<dbReference type="RefSeq" id="WP_010958199.1">
    <property type="nucleotide sequence ID" value="NC_002971.4"/>
</dbReference>
<dbReference type="SMR" id="P53592"/>
<dbReference type="STRING" id="227377.CBU_1397"/>
<dbReference type="EnsemblBacteria" id="AAO90896">
    <property type="protein sequence ID" value="AAO90896"/>
    <property type="gene ID" value="CBU_1397"/>
</dbReference>
<dbReference type="GeneID" id="1209303"/>
<dbReference type="KEGG" id="cbu:CBU_1397"/>
<dbReference type="PATRIC" id="fig|227377.7.peg.1399"/>
<dbReference type="eggNOG" id="COG0045">
    <property type="taxonomic scope" value="Bacteria"/>
</dbReference>
<dbReference type="HOGENOM" id="CLU_037430_0_2_6"/>
<dbReference type="OrthoDB" id="9802602at2"/>
<dbReference type="UniPathway" id="UPA00223">
    <property type="reaction ID" value="UER00999"/>
</dbReference>
<dbReference type="Proteomes" id="UP000002671">
    <property type="component" value="Chromosome"/>
</dbReference>
<dbReference type="GO" id="GO:0005829">
    <property type="term" value="C:cytosol"/>
    <property type="evidence" value="ECO:0000318"/>
    <property type="project" value="GO_Central"/>
</dbReference>
<dbReference type="GO" id="GO:0042709">
    <property type="term" value="C:succinate-CoA ligase complex"/>
    <property type="evidence" value="ECO:0000318"/>
    <property type="project" value="GO_Central"/>
</dbReference>
<dbReference type="GO" id="GO:0005524">
    <property type="term" value="F:ATP binding"/>
    <property type="evidence" value="ECO:0007669"/>
    <property type="project" value="UniProtKB-UniRule"/>
</dbReference>
<dbReference type="GO" id="GO:0000287">
    <property type="term" value="F:magnesium ion binding"/>
    <property type="evidence" value="ECO:0007669"/>
    <property type="project" value="UniProtKB-UniRule"/>
</dbReference>
<dbReference type="GO" id="GO:0004775">
    <property type="term" value="F:succinate-CoA ligase (ADP-forming) activity"/>
    <property type="evidence" value="ECO:0000318"/>
    <property type="project" value="GO_Central"/>
</dbReference>
<dbReference type="GO" id="GO:0004776">
    <property type="term" value="F:succinate-CoA ligase (GDP-forming) activity"/>
    <property type="evidence" value="ECO:0007669"/>
    <property type="project" value="RHEA"/>
</dbReference>
<dbReference type="GO" id="GO:0006104">
    <property type="term" value="P:succinyl-CoA metabolic process"/>
    <property type="evidence" value="ECO:0000318"/>
    <property type="project" value="GO_Central"/>
</dbReference>
<dbReference type="GO" id="GO:0006099">
    <property type="term" value="P:tricarboxylic acid cycle"/>
    <property type="evidence" value="ECO:0000318"/>
    <property type="project" value="GO_Central"/>
</dbReference>
<dbReference type="FunFam" id="3.30.1490.20:FF:000002">
    <property type="entry name" value="Succinate--CoA ligase [ADP-forming] subunit beta"/>
    <property type="match status" value="1"/>
</dbReference>
<dbReference type="FunFam" id="3.30.470.20:FF:000002">
    <property type="entry name" value="Succinate--CoA ligase [ADP-forming] subunit beta"/>
    <property type="match status" value="1"/>
</dbReference>
<dbReference type="FunFam" id="3.40.50.261:FF:000001">
    <property type="entry name" value="Succinate--CoA ligase [ADP-forming] subunit beta"/>
    <property type="match status" value="1"/>
</dbReference>
<dbReference type="Gene3D" id="3.30.1490.20">
    <property type="entry name" value="ATP-grasp fold, A domain"/>
    <property type="match status" value="1"/>
</dbReference>
<dbReference type="Gene3D" id="3.30.470.20">
    <property type="entry name" value="ATP-grasp fold, B domain"/>
    <property type="match status" value="1"/>
</dbReference>
<dbReference type="Gene3D" id="3.40.50.261">
    <property type="entry name" value="Succinyl-CoA synthetase domains"/>
    <property type="match status" value="1"/>
</dbReference>
<dbReference type="HAMAP" id="MF_00558">
    <property type="entry name" value="Succ_CoA_beta"/>
    <property type="match status" value="1"/>
</dbReference>
<dbReference type="InterPro" id="IPR011761">
    <property type="entry name" value="ATP-grasp"/>
</dbReference>
<dbReference type="InterPro" id="IPR013650">
    <property type="entry name" value="ATP-grasp_succ-CoA_synth-type"/>
</dbReference>
<dbReference type="InterPro" id="IPR013815">
    <property type="entry name" value="ATP_grasp_subdomain_1"/>
</dbReference>
<dbReference type="InterPro" id="IPR017866">
    <property type="entry name" value="Succ-CoA_synthase_bsu_CS"/>
</dbReference>
<dbReference type="InterPro" id="IPR005811">
    <property type="entry name" value="SUCC_ACL_C"/>
</dbReference>
<dbReference type="InterPro" id="IPR005809">
    <property type="entry name" value="Succ_CoA_ligase-like_bsu"/>
</dbReference>
<dbReference type="InterPro" id="IPR016102">
    <property type="entry name" value="Succinyl-CoA_synth-like"/>
</dbReference>
<dbReference type="NCBIfam" id="NF001913">
    <property type="entry name" value="PRK00696.1"/>
    <property type="match status" value="1"/>
</dbReference>
<dbReference type="NCBIfam" id="TIGR01016">
    <property type="entry name" value="sucCoAbeta"/>
    <property type="match status" value="1"/>
</dbReference>
<dbReference type="PANTHER" id="PTHR11815:SF10">
    <property type="entry name" value="SUCCINATE--COA LIGASE [GDP-FORMING] SUBUNIT BETA, MITOCHONDRIAL"/>
    <property type="match status" value="1"/>
</dbReference>
<dbReference type="PANTHER" id="PTHR11815">
    <property type="entry name" value="SUCCINYL-COA SYNTHETASE BETA CHAIN"/>
    <property type="match status" value="1"/>
</dbReference>
<dbReference type="Pfam" id="PF08442">
    <property type="entry name" value="ATP-grasp_2"/>
    <property type="match status" value="1"/>
</dbReference>
<dbReference type="Pfam" id="PF00549">
    <property type="entry name" value="Ligase_CoA"/>
    <property type="match status" value="1"/>
</dbReference>
<dbReference type="PIRSF" id="PIRSF001554">
    <property type="entry name" value="SucCS_beta"/>
    <property type="match status" value="1"/>
</dbReference>
<dbReference type="SUPFAM" id="SSF56059">
    <property type="entry name" value="Glutathione synthetase ATP-binding domain-like"/>
    <property type="match status" value="1"/>
</dbReference>
<dbReference type="SUPFAM" id="SSF52210">
    <property type="entry name" value="Succinyl-CoA synthetase domains"/>
    <property type="match status" value="1"/>
</dbReference>
<dbReference type="PROSITE" id="PS50975">
    <property type="entry name" value="ATP_GRASP"/>
    <property type="match status" value="1"/>
</dbReference>
<dbReference type="PROSITE" id="PS01217">
    <property type="entry name" value="SUCCINYL_COA_LIG_3"/>
    <property type="match status" value="1"/>
</dbReference>
<protein>
    <recommendedName>
        <fullName evidence="1">Succinate--CoA ligase [ADP-forming] subunit beta</fullName>
        <ecNumber evidence="1">6.2.1.5</ecNumber>
    </recommendedName>
    <alternativeName>
        <fullName evidence="1">Succinyl-CoA synthetase subunit beta</fullName>
        <shortName evidence="1">SCS-beta</shortName>
    </alternativeName>
</protein>
<proteinExistence type="inferred from homology"/>
<feature type="chain" id="PRO_0000102830" description="Succinate--CoA ligase [ADP-forming] subunit beta">
    <location>
        <begin position="1"/>
        <end position="390"/>
    </location>
</feature>
<feature type="domain" description="ATP-grasp" evidence="1">
    <location>
        <begin position="9"/>
        <end position="245"/>
    </location>
</feature>
<feature type="binding site" evidence="1">
    <location>
        <position position="46"/>
    </location>
    <ligand>
        <name>ATP</name>
        <dbReference type="ChEBI" id="CHEBI:30616"/>
    </ligand>
</feature>
<feature type="binding site" evidence="1">
    <location>
        <begin position="53"/>
        <end position="55"/>
    </location>
    <ligand>
        <name>ATP</name>
        <dbReference type="ChEBI" id="CHEBI:30616"/>
    </ligand>
</feature>
<feature type="binding site" evidence="1">
    <location>
        <position position="99"/>
    </location>
    <ligand>
        <name>ATP</name>
        <dbReference type="ChEBI" id="CHEBI:30616"/>
    </ligand>
</feature>
<feature type="binding site" evidence="1">
    <location>
        <position position="102"/>
    </location>
    <ligand>
        <name>ATP</name>
        <dbReference type="ChEBI" id="CHEBI:30616"/>
    </ligand>
</feature>
<feature type="binding site" evidence="1">
    <location>
        <position position="107"/>
    </location>
    <ligand>
        <name>ATP</name>
        <dbReference type="ChEBI" id="CHEBI:30616"/>
    </ligand>
</feature>
<feature type="binding site" evidence="1">
    <location>
        <position position="200"/>
    </location>
    <ligand>
        <name>Mg(2+)</name>
        <dbReference type="ChEBI" id="CHEBI:18420"/>
    </ligand>
</feature>
<feature type="binding site" evidence="1">
    <location>
        <position position="214"/>
    </location>
    <ligand>
        <name>Mg(2+)</name>
        <dbReference type="ChEBI" id="CHEBI:18420"/>
    </ligand>
</feature>
<feature type="binding site" evidence="1">
    <location>
        <position position="265"/>
    </location>
    <ligand>
        <name>substrate</name>
        <note>ligand shared with subunit alpha</note>
    </ligand>
</feature>
<feature type="binding site" evidence="1">
    <location>
        <begin position="322"/>
        <end position="324"/>
    </location>
    <ligand>
        <name>substrate</name>
        <note>ligand shared with subunit alpha</note>
    </ligand>
</feature>
<feature type="sequence conflict" description="In Ref. 2; CAA54876." evidence="2" ref="2">
    <original>H</original>
    <variation>Y</variation>
    <location>
        <position position="10"/>
    </location>
</feature>
<feature type="sequence conflict" description="In Ref. 2; CAA54876." evidence="2" ref="2">
    <original>K</original>
    <variation>N</variation>
    <location>
        <position position="13"/>
    </location>
</feature>
<feature type="sequence conflict" description="In Ref. 2; CAA54876." evidence="2" ref="2">
    <original>P</original>
    <variation>A</variation>
    <location>
        <position position="18"/>
    </location>
</feature>
<feature type="sequence conflict" description="In Ref. 1." evidence="2" ref="1">
    <location>
        <begin position="140"/>
        <end position="143"/>
    </location>
</feature>
<feature type="sequence conflict" description="In Ref. 1; AAA61787." evidence="2" ref="1">
    <original>S</original>
    <variation>T</variation>
    <location>
        <position position="293"/>
    </location>
</feature>
<reference key="1">
    <citation type="submission" date="1995-02" db="EMBL/GenBank/DDBJ databases">
        <authorList>
            <person name="Schimmels J.A."/>
            <person name="Mallavia L.P."/>
        </authorList>
    </citation>
    <scope>NUCLEOTIDE SEQUENCE [GENOMIC DNA]</scope>
    <source>
        <strain>Nine Mile phase I</strain>
    </source>
</reference>
<reference key="2">
    <citation type="submission" date="1994-03" db="EMBL/GenBank/DDBJ databases">
        <authorList>
            <person name="Thiele D."/>
            <person name="Willems H."/>
            <person name="Oswald W."/>
            <person name="Krauss H."/>
        </authorList>
    </citation>
    <scope>NUCLEOTIDE SEQUENCE [GENOMIC DNA]</scope>
    <source>
        <strain>Nine Mile phase I</strain>
    </source>
</reference>
<reference key="3">
    <citation type="journal article" date="2003" name="Proc. Natl. Acad. Sci. U.S.A.">
        <title>Complete genome sequence of the Q-fever pathogen, Coxiella burnetii.</title>
        <authorList>
            <person name="Seshadri R."/>
            <person name="Paulsen I.T."/>
            <person name="Eisen J.A."/>
            <person name="Read T.D."/>
            <person name="Nelson K.E."/>
            <person name="Nelson W.C."/>
            <person name="Ward N.L."/>
            <person name="Tettelin H."/>
            <person name="Davidsen T.M."/>
            <person name="Beanan M.J."/>
            <person name="DeBoy R.T."/>
            <person name="Daugherty S.C."/>
            <person name="Brinkac L.M."/>
            <person name="Madupu R."/>
            <person name="Dodson R.J."/>
            <person name="Khouri H.M."/>
            <person name="Lee K.H."/>
            <person name="Carty H.A."/>
            <person name="Scanlan D."/>
            <person name="Heinzen R.A."/>
            <person name="Thompson H.A."/>
            <person name="Samuel J.E."/>
            <person name="Fraser C.M."/>
            <person name="Heidelberg J.F."/>
        </authorList>
    </citation>
    <scope>NUCLEOTIDE SEQUENCE [LARGE SCALE GENOMIC DNA]</scope>
    <source>
        <strain>RSA 493 / Nine Mile phase I</strain>
    </source>
</reference>
<keyword id="KW-0067">ATP-binding</keyword>
<keyword id="KW-0436">Ligase</keyword>
<keyword id="KW-0460">Magnesium</keyword>
<keyword id="KW-0479">Metal-binding</keyword>
<keyword id="KW-0547">Nucleotide-binding</keyword>
<keyword id="KW-1185">Reference proteome</keyword>
<keyword id="KW-0816">Tricarboxylic acid cycle</keyword>
<organism>
    <name type="scientific">Coxiella burnetii (strain RSA 493 / Nine Mile phase I)</name>
    <dbReference type="NCBI Taxonomy" id="227377"/>
    <lineage>
        <taxon>Bacteria</taxon>
        <taxon>Pseudomonadati</taxon>
        <taxon>Pseudomonadota</taxon>
        <taxon>Gammaproteobacteria</taxon>
        <taxon>Legionellales</taxon>
        <taxon>Coxiellaceae</taxon>
        <taxon>Coxiella</taxon>
    </lineage>
</organism>
<accession>P53592</accession>
<evidence type="ECO:0000255" key="1">
    <source>
        <dbReference type="HAMAP-Rule" id="MF_00558"/>
    </source>
</evidence>
<evidence type="ECO:0000305" key="2"/>
<comment type="function">
    <text evidence="1">Succinyl-CoA synthetase functions in the citric acid cycle (TCA), coupling the hydrolysis of succinyl-CoA to the synthesis of either ATP or GTP and thus represents the only step of substrate-level phosphorylation in the TCA. The beta subunit provides nucleotide specificity of the enzyme and binds the substrate succinate, while the binding sites for coenzyme A and phosphate are found in the alpha subunit.</text>
</comment>
<comment type="catalytic activity">
    <reaction evidence="1">
        <text>succinate + ATP + CoA = succinyl-CoA + ADP + phosphate</text>
        <dbReference type="Rhea" id="RHEA:17661"/>
        <dbReference type="ChEBI" id="CHEBI:30031"/>
        <dbReference type="ChEBI" id="CHEBI:30616"/>
        <dbReference type="ChEBI" id="CHEBI:43474"/>
        <dbReference type="ChEBI" id="CHEBI:57287"/>
        <dbReference type="ChEBI" id="CHEBI:57292"/>
        <dbReference type="ChEBI" id="CHEBI:456216"/>
        <dbReference type="EC" id="6.2.1.5"/>
    </reaction>
    <physiologicalReaction direction="right-to-left" evidence="1">
        <dbReference type="Rhea" id="RHEA:17663"/>
    </physiologicalReaction>
</comment>
<comment type="catalytic activity">
    <reaction evidence="1">
        <text>GTP + succinate + CoA = succinyl-CoA + GDP + phosphate</text>
        <dbReference type="Rhea" id="RHEA:22120"/>
        <dbReference type="ChEBI" id="CHEBI:30031"/>
        <dbReference type="ChEBI" id="CHEBI:37565"/>
        <dbReference type="ChEBI" id="CHEBI:43474"/>
        <dbReference type="ChEBI" id="CHEBI:57287"/>
        <dbReference type="ChEBI" id="CHEBI:57292"/>
        <dbReference type="ChEBI" id="CHEBI:58189"/>
    </reaction>
    <physiologicalReaction direction="right-to-left" evidence="1">
        <dbReference type="Rhea" id="RHEA:22122"/>
    </physiologicalReaction>
</comment>
<comment type="cofactor">
    <cofactor evidence="1">
        <name>Mg(2+)</name>
        <dbReference type="ChEBI" id="CHEBI:18420"/>
    </cofactor>
    <text evidence="1">Binds 1 Mg(2+) ion per subunit.</text>
</comment>
<comment type="pathway">
    <text evidence="1">Carbohydrate metabolism; tricarboxylic acid cycle; succinate from succinyl-CoA (ligase route): step 1/1.</text>
</comment>
<comment type="subunit">
    <text evidence="1">Heterotetramer of two alpha and two beta subunits.</text>
</comment>
<comment type="similarity">
    <text evidence="1">Belongs to the succinate/malate CoA ligase beta subunit family.</text>
</comment>
<name>SUCC_COXBU</name>